<proteinExistence type="evidence at transcript level"/>
<organism>
    <name type="scientific">Caenorhabditis elegans</name>
    <dbReference type="NCBI Taxonomy" id="6239"/>
    <lineage>
        <taxon>Eukaryota</taxon>
        <taxon>Metazoa</taxon>
        <taxon>Ecdysozoa</taxon>
        <taxon>Nematoda</taxon>
        <taxon>Chromadorea</taxon>
        <taxon>Rhabditida</taxon>
        <taxon>Rhabditina</taxon>
        <taxon>Rhabditomorpha</taxon>
        <taxon>Rhabditoidea</taxon>
        <taxon>Rhabditidae</taxon>
        <taxon>Peloderinae</taxon>
        <taxon>Caenorhabditis</taxon>
    </lineage>
</organism>
<keyword id="KW-0406">Ion transport</keyword>
<keyword id="KW-0472">Membrane</keyword>
<keyword id="KW-0496">Mitochondrion</keyword>
<keyword id="KW-1000">Mitochondrion outer membrane</keyword>
<keyword id="KW-0626">Porin</keyword>
<keyword id="KW-0653">Protein transport</keyword>
<keyword id="KW-1185">Reference proteome</keyword>
<keyword id="KW-0812">Transmembrane</keyword>
<keyword id="KW-1134">Transmembrane beta strand</keyword>
<keyword id="KW-0813">Transport</keyword>
<comment type="function">
    <text evidence="3">Channel-forming protein essential for import of protein precursors into mitochondria. Specifically required for nnt-1 accumulation in the mitochondria and may be involved in the secretion of daf-28/insulin from the mitochondria. Required for embryonic and larval development.</text>
</comment>
<comment type="subunit">
    <text evidence="1">Forms part of the preprotein translocase complex of the outer mitochondrial membrane (TOM complex). Interacts with mitochondrial targeting sequences.</text>
</comment>
<comment type="subcellular location">
    <subcellularLocation>
        <location evidence="3">Mitochondrion outer membrane</location>
        <topology evidence="3">Multi-pass membrane protein</topology>
    </subcellularLocation>
</comment>
<comment type="tissue specificity">
    <text evidence="3">Ubiquitously expressed, but highly expressed in the pharyngeal muscles, the nerve ring, the intestine, gonadal sheath and in the tail hypodermis.</text>
</comment>
<comment type="disruption phenotype">
    <text evidence="3">Mutants arrest during the larval developmental stage. Impaired mitochondrial homeostasis with the up-regulation of the mitochondrial unfolded protein chaperone hsp-6. RNAi-mediated knockdown results in embryonic lethality or larval lethality between the L1 and L3 stage of larval development. Surviving progeny are growth retarded. No localization of the mitochondrial targeted protein nnt-1 to the mitochondria of intestinal cells.</text>
</comment>
<comment type="similarity">
    <text evidence="4">Belongs to the Tom40 family.</text>
</comment>
<reference key="1">
    <citation type="journal article" date="1998" name="Science">
        <title>Genome sequence of the nematode C. elegans: a platform for investigating biology.</title>
        <authorList>
            <consortium name="The C. elegans sequencing consortium"/>
        </authorList>
    </citation>
    <scope>NUCLEOTIDE SEQUENCE [LARGE SCALE GENOMIC DNA]</scope>
    <source>
        <strain>Bristol N2</strain>
    </source>
</reference>
<reference key="2">
    <citation type="journal article" date="2011" name="PLoS ONE">
        <title>Mitochondrial function is required for secretion of DAF-28/insulin in C. elegans.</title>
        <authorList>
            <person name="Billing O."/>
            <person name="Kao G."/>
            <person name="Naredi P."/>
        </authorList>
    </citation>
    <scope>FUNCTION</scope>
    <scope>SUBCELLULAR LOCATION</scope>
    <scope>TISSUE SPECIFICITY</scope>
    <scope>DISRUPTION PHENOTYPE</scope>
</reference>
<name>TOM40_CAEEL</name>
<gene>
    <name evidence="5" type="primary">tomm-40</name>
    <name evidence="5" type="ORF">C18E9.6</name>
</gene>
<protein>
    <recommendedName>
        <fullName>Mitochondrial import receptor subunit TOM40 homolog</fullName>
    </recommendedName>
    <alternativeName>
        <fullName>Translocase of outer membrane 40 kDa subunit homolog</fullName>
    </alternativeName>
</protein>
<dbReference type="EMBL" id="Z70034">
    <property type="protein sequence ID" value="CAA93850.1"/>
    <property type="molecule type" value="Genomic_DNA"/>
</dbReference>
<dbReference type="PIR" id="T19399">
    <property type="entry name" value="T19399"/>
</dbReference>
<dbReference type="RefSeq" id="NP_495912.1">
    <property type="nucleotide sequence ID" value="NM_063511.7"/>
</dbReference>
<dbReference type="SMR" id="Q18090"/>
<dbReference type="BioGRID" id="39758">
    <property type="interactions" value="19"/>
</dbReference>
<dbReference type="DIP" id="DIP-25856N"/>
<dbReference type="FunCoup" id="Q18090">
    <property type="interactions" value="2388"/>
</dbReference>
<dbReference type="IntAct" id="Q18090">
    <property type="interactions" value="1"/>
</dbReference>
<dbReference type="STRING" id="6239.C18E9.6.1"/>
<dbReference type="TCDB" id="1.B.8.2.8">
    <property type="family name" value="the mitochondrial and plastid porin (mpp) family"/>
</dbReference>
<dbReference type="PaxDb" id="6239-C18E9.6"/>
<dbReference type="PeptideAtlas" id="Q18090"/>
<dbReference type="EnsemblMetazoa" id="C18E9.6.1">
    <property type="protein sequence ID" value="C18E9.6.1"/>
    <property type="gene ID" value="WBGene00007686"/>
</dbReference>
<dbReference type="GeneID" id="174431"/>
<dbReference type="KEGG" id="cel:CELE_C18E9.6"/>
<dbReference type="UCSC" id="C18E9.6">
    <property type="organism name" value="c. elegans"/>
</dbReference>
<dbReference type="AGR" id="WB:WBGene00007686"/>
<dbReference type="CTD" id="174431"/>
<dbReference type="WormBase" id="C18E9.6">
    <property type="protein sequence ID" value="CE05298"/>
    <property type="gene ID" value="WBGene00007686"/>
    <property type="gene designation" value="tomm-40"/>
</dbReference>
<dbReference type="eggNOG" id="KOG3296">
    <property type="taxonomic scope" value="Eukaryota"/>
</dbReference>
<dbReference type="GeneTree" id="ENSGT00390000003308"/>
<dbReference type="HOGENOM" id="CLU_054399_0_0_1"/>
<dbReference type="InParanoid" id="Q18090"/>
<dbReference type="OMA" id="TRFNYRW"/>
<dbReference type="OrthoDB" id="19656at2759"/>
<dbReference type="PhylomeDB" id="Q18090"/>
<dbReference type="SignaLink" id="Q18090"/>
<dbReference type="PRO" id="PR:Q18090"/>
<dbReference type="Proteomes" id="UP000001940">
    <property type="component" value="Chromosome II"/>
</dbReference>
<dbReference type="Bgee" id="WBGene00007686">
    <property type="expression patterns" value="Expressed in pharyngeal muscle cell (C elegans) and 4 other cell types or tissues"/>
</dbReference>
<dbReference type="GO" id="GO:0031966">
    <property type="term" value="C:mitochondrial membrane"/>
    <property type="evidence" value="ECO:0000314"/>
    <property type="project" value="WormBase"/>
</dbReference>
<dbReference type="GO" id="GO:0005742">
    <property type="term" value="C:mitochondrial outer membrane translocase complex"/>
    <property type="evidence" value="ECO:0000318"/>
    <property type="project" value="GO_Central"/>
</dbReference>
<dbReference type="GO" id="GO:0046930">
    <property type="term" value="C:pore complex"/>
    <property type="evidence" value="ECO:0007669"/>
    <property type="project" value="UniProtKB-KW"/>
</dbReference>
<dbReference type="GO" id="GO:0015288">
    <property type="term" value="F:porin activity"/>
    <property type="evidence" value="ECO:0007669"/>
    <property type="project" value="UniProtKB-KW"/>
</dbReference>
<dbReference type="GO" id="GO:0008320">
    <property type="term" value="F:protein transmembrane transporter activity"/>
    <property type="evidence" value="ECO:0000318"/>
    <property type="project" value="GO_Central"/>
</dbReference>
<dbReference type="GO" id="GO:0006811">
    <property type="term" value="P:monoatomic ion transport"/>
    <property type="evidence" value="ECO:0007669"/>
    <property type="project" value="UniProtKB-KW"/>
</dbReference>
<dbReference type="GO" id="GO:0030150">
    <property type="term" value="P:protein import into mitochondrial matrix"/>
    <property type="evidence" value="ECO:0000315"/>
    <property type="project" value="UniProtKB"/>
</dbReference>
<dbReference type="GO" id="GO:0006626">
    <property type="term" value="P:protein targeting to mitochondrion"/>
    <property type="evidence" value="ECO:0000250"/>
    <property type="project" value="UniProtKB"/>
</dbReference>
<dbReference type="CDD" id="cd07305">
    <property type="entry name" value="Porin3_Tom40"/>
    <property type="match status" value="1"/>
</dbReference>
<dbReference type="FunFam" id="2.40.160.10:FF:000005">
    <property type="entry name" value="mitochondrial import receptor subunit TOM40 homolog"/>
    <property type="match status" value="1"/>
</dbReference>
<dbReference type="Gene3D" id="2.40.160.10">
    <property type="entry name" value="Porin"/>
    <property type="match status" value="1"/>
</dbReference>
<dbReference type="InterPro" id="IPR023614">
    <property type="entry name" value="Porin_dom_sf"/>
</dbReference>
<dbReference type="InterPro" id="IPR027246">
    <property type="entry name" value="Porin_Euk/Tom40"/>
</dbReference>
<dbReference type="InterPro" id="IPR037930">
    <property type="entry name" value="Tom40"/>
</dbReference>
<dbReference type="PANTHER" id="PTHR10802">
    <property type="entry name" value="MITOCHONDRIAL IMPORT RECEPTOR SUBUNIT TOM40"/>
    <property type="match status" value="1"/>
</dbReference>
<dbReference type="Pfam" id="PF01459">
    <property type="entry name" value="Porin_3"/>
    <property type="match status" value="1"/>
</dbReference>
<sequence>MATPTESELASPIPQTNPGSYEELHRKARDVFPTCFEGAKLMVNKGLSSHFQVSHTLSLSAMNTGYRFGATYVGTNQVGPAEAYPILLGDTDVNGNTTATILHQLGIYRTKLQGQIQQGKLAGAQATIERKGRLSTLGLTLANIDLVNEAGILVGQFLRRLTPRLDVGTEMVYQYGKNIPGGQISVLSYAARYTANHFIAAATLGASGVHLTYYHKQNENLAFGVEFECNANVGEAVTTLAYQTELPEEGVTMRASFDTNWTVGGVFEKRLSQQLPFTLALSGTLNHVKAAGKFGIGLIIG</sequence>
<feature type="chain" id="PRO_0000051529" description="Mitochondrial import receptor subunit TOM40 homolog">
    <location>
        <begin position="1"/>
        <end position="301"/>
    </location>
</feature>
<feature type="region of interest" description="Disordered" evidence="2">
    <location>
        <begin position="1"/>
        <end position="20"/>
    </location>
</feature>
<feature type="compositionally biased region" description="Polar residues" evidence="2">
    <location>
        <begin position="1"/>
        <end position="19"/>
    </location>
</feature>
<evidence type="ECO:0000250" key="1">
    <source>
        <dbReference type="UniProtKB" id="O96008"/>
    </source>
</evidence>
<evidence type="ECO:0000256" key="2">
    <source>
        <dbReference type="SAM" id="MobiDB-lite"/>
    </source>
</evidence>
<evidence type="ECO:0000269" key="3">
    <source>
    </source>
</evidence>
<evidence type="ECO:0000305" key="4"/>
<evidence type="ECO:0000312" key="5">
    <source>
        <dbReference type="WormBase" id="C18E9.6"/>
    </source>
</evidence>
<accession>Q18090</accession>